<accession>P24449</accession>
<sequence length="235" mass="25505">MAAKIFCLLMLLGLSASAATATIFPQCSQAPIASLLPPYLSPAVSSVCENPILQPYRIQQAIAAGILPLSPLFLQQSSALLQQLPLVHLLAQNIRAQQLQQLVLANVAAYSQQQQFLPFNQLAALNSAAYLQQQQLLPFSQLTAAYPQQFLPFNQLAALNSAAYLQQQQLLPFSQLAVVSPAAFLTQQQLLPFYLHAVPNAGTLLQLQQLLPFNQLALTNPAAFYQQPIIGGALF</sequence>
<keyword id="KW-1185">Reference proteome</keyword>
<keyword id="KW-0677">Repeat</keyword>
<keyword id="KW-0708">Seed storage protein</keyword>
<keyword id="KW-0732">Signal</keyword>
<keyword id="KW-0758">Storage protein</keyword>
<protein>
    <recommendedName>
        <fullName>Zein-alpha PMS1</fullName>
    </recommendedName>
    <alternativeName>
        <fullName>19 kDa zein PMS1</fullName>
    </alternativeName>
</protein>
<dbReference type="EMBL" id="X53582">
    <property type="protein sequence ID" value="CAA37651.1"/>
    <property type="molecule type" value="Genomic_DNA"/>
</dbReference>
<dbReference type="PIR" id="S15655">
    <property type="entry name" value="S15655"/>
</dbReference>
<dbReference type="STRING" id="4577.P24449"/>
<dbReference type="MaizeGDB" id="58096"/>
<dbReference type="InParanoid" id="P24449"/>
<dbReference type="Proteomes" id="UP000007305">
    <property type="component" value="Unplaced"/>
</dbReference>
<dbReference type="ExpressionAtlas" id="P24449">
    <property type="expression patterns" value="baseline and differential"/>
</dbReference>
<dbReference type="GO" id="GO:0045735">
    <property type="term" value="F:nutrient reservoir activity"/>
    <property type="evidence" value="ECO:0007669"/>
    <property type="project" value="UniProtKB-KW"/>
</dbReference>
<dbReference type="InterPro" id="IPR002530">
    <property type="entry name" value="Zein"/>
</dbReference>
<dbReference type="InterPro" id="IPR051903">
    <property type="entry name" value="Zein-alpha"/>
</dbReference>
<dbReference type="PANTHER" id="PTHR48214">
    <property type="entry name" value="ZEIN-ALPHA PMS2"/>
    <property type="match status" value="1"/>
</dbReference>
<dbReference type="PANTHER" id="PTHR48214:SF1">
    <property type="entry name" value="ZEIN-ALPHA PMS2"/>
    <property type="match status" value="1"/>
</dbReference>
<dbReference type="Pfam" id="PF01559">
    <property type="entry name" value="Zein"/>
    <property type="match status" value="2"/>
</dbReference>
<name>ZEAC_MAIZE</name>
<comment type="function">
    <text>Zeins are major seed storage proteins.</text>
</comment>
<comment type="miscellaneous">
    <text>The alpha zeins of 19 kDa and 22 kDa account for 70% of the total zein fraction. They are encoded by a large multigene family.</text>
</comment>
<comment type="miscellaneous">
    <text evidence="2">Structurally, 22K and 19K zeins are composed of nine adjacent, topologically antiparallel helices clustered within a distorted cylinder.</text>
</comment>
<comment type="similarity">
    <text evidence="3">Belongs to the zein family.</text>
</comment>
<reference key="1">
    <citation type="journal article" date="1989" name="Gene">
        <title>Analysis of distal flanking regions of maize 19-kDa zein genes.</title>
        <authorList>
            <person name="Quayle T.J.A."/>
            <person name="Brown J.W.S."/>
            <person name="Feix G."/>
        </authorList>
    </citation>
    <scope>NUCLEOTIDE SEQUENCE [GENOMIC DNA]</scope>
    <source>
        <strain>cv. A619</strain>
    </source>
</reference>
<gene>
    <name type="primary">ZMPMS1</name>
</gene>
<evidence type="ECO:0000250" key="1"/>
<evidence type="ECO:0000250" key="2">
    <source>
        <dbReference type="UniProtKB" id="P04698"/>
    </source>
</evidence>
<evidence type="ECO:0000305" key="3"/>
<organism>
    <name type="scientific">Zea mays</name>
    <name type="common">Maize</name>
    <dbReference type="NCBI Taxonomy" id="4577"/>
    <lineage>
        <taxon>Eukaryota</taxon>
        <taxon>Viridiplantae</taxon>
        <taxon>Streptophyta</taxon>
        <taxon>Embryophyta</taxon>
        <taxon>Tracheophyta</taxon>
        <taxon>Spermatophyta</taxon>
        <taxon>Magnoliopsida</taxon>
        <taxon>Liliopsida</taxon>
        <taxon>Poales</taxon>
        <taxon>Poaceae</taxon>
        <taxon>PACMAD clade</taxon>
        <taxon>Panicoideae</taxon>
        <taxon>Andropogonodae</taxon>
        <taxon>Andropogoneae</taxon>
        <taxon>Tripsacinae</taxon>
        <taxon>Zea</taxon>
    </lineage>
</organism>
<proteinExistence type="inferred from homology"/>
<feature type="signal peptide" evidence="1">
    <location>
        <begin position="1"/>
        <end position="21"/>
    </location>
</feature>
<feature type="chain" id="PRO_0000041622" description="Zein-alpha PMS1">
    <location>
        <begin position="22"/>
        <end position="235"/>
    </location>
</feature>